<sequence length="715" mass="79505">MSSLFVWLNRLAISAMQRSEVVGAAIVMSIVFMMIIPLPTGLIDVLIALNICISSLLIVLAMYLPKPLAFSTFPSVLLLTTMFRLALSISTTRQILLQQDAGHIVEAFGNFVVGGNLAVGLVIFLILTVVNFLVITKGSERVAEVAARFTLDAMPGKQMSIDSDLRAGLIEAHQARQRRENLAKESQLFGAMDGAMKFVKGDAIAGLVIVFINMIGGFAIGVLQNGMEAGAAMHIYSVLTIGDGLIAQIPALLISLTAGMIITRVSADGQQVDANIGREIAEQLTSQPKAWIMSAAGMLGFALLPGMPTAVFVIISAIALGSGLFQLWRIKQQDSQQQADELHAQQLAPEDNGYQDLRRFNPTRAYLLQFSQEHLNSEAAESLIQHIRRLRNRLVYHFGFTLPSFDIEFSPALAADEFRFCVYEIPLVTATFAVEQLAVRTSSIEIHLADGESDGQIQPGQAERDEHHWCWLPPQHPLLQQEDRRCWNAQQLIMLRMEQAIHQSGAQFIGLQESKSILNWLESEQPELAQELQRIMPLSRFAAVLQRLASERIPLRSVRTIAETLIEHGQHERDSAALTDFVRIALKEHICHQYQQPNGLNVWLLTPETEELLRDSLRQAQSETFFSLAQEYGINLLNQMRSAFPPYDNHHALILVAQDLRSPLRALLKDEFHAVPVLSFAELTSNVAINVLGRLDLQQSPPELQENDPCMNYAY</sequence>
<proteinExistence type="inferred from homology"/>
<gene>
    <name type="primary">hrpI</name>
</gene>
<keyword id="KW-0997">Cell inner membrane</keyword>
<keyword id="KW-1003">Cell membrane</keyword>
<keyword id="KW-0928">Hypersensitive response elicitation</keyword>
<keyword id="KW-0472">Membrane</keyword>
<keyword id="KW-0653">Protein transport</keyword>
<keyword id="KW-0812">Transmembrane</keyword>
<keyword id="KW-1133">Transmembrane helix</keyword>
<keyword id="KW-0813">Transport</keyword>
<accession>P35654</accession>
<dbReference type="EMBL" id="L25828">
    <property type="protein sequence ID" value="AAB05999.2"/>
    <property type="molecule type" value="Genomic_DNA"/>
</dbReference>
<dbReference type="PIR" id="A49913">
    <property type="entry name" value="A49913"/>
</dbReference>
<dbReference type="SMR" id="P35654"/>
<dbReference type="OMA" id="QHERDIN"/>
<dbReference type="GO" id="GO:0005886">
    <property type="term" value="C:plasma membrane"/>
    <property type="evidence" value="ECO:0007669"/>
    <property type="project" value="UniProtKB-SubCell"/>
</dbReference>
<dbReference type="GO" id="GO:0009306">
    <property type="term" value="P:protein secretion"/>
    <property type="evidence" value="ECO:0007669"/>
    <property type="project" value="InterPro"/>
</dbReference>
<dbReference type="GO" id="GO:0052040">
    <property type="term" value="P:symbiont-mediated perturbation of host programmed cell death"/>
    <property type="evidence" value="ECO:0007669"/>
    <property type="project" value="UniProtKB-KW"/>
</dbReference>
<dbReference type="Gene3D" id="3.40.30.60">
    <property type="entry name" value="FHIPEP family, domain 1"/>
    <property type="match status" value="1"/>
</dbReference>
<dbReference type="Gene3D" id="1.10.8.540">
    <property type="entry name" value="FHIPEP family, domain 3"/>
    <property type="match status" value="1"/>
</dbReference>
<dbReference type="Gene3D" id="3.40.50.12790">
    <property type="entry name" value="FHIPEP family, domain 4"/>
    <property type="match status" value="1"/>
</dbReference>
<dbReference type="InterPro" id="IPR042194">
    <property type="entry name" value="FHIPEP_1"/>
</dbReference>
<dbReference type="InterPro" id="IPR042193">
    <property type="entry name" value="FHIPEP_3"/>
</dbReference>
<dbReference type="InterPro" id="IPR042196">
    <property type="entry name" value="FHIPEP_4"/>
</dbReference>
<dbReference type="InterPro" id="IPR025505">
    <property type="entry name" value="FHIPEP_CS"/>
</dbReference>
<dbReference type="InterPro" id="IPR001712">
    <property type="entry name" value="T3SS_FHIPEP"/>
</dbReference>
<dbReference type="InterPro" id="IPR006302">
    <property type="entry name" value="T3SS_HrcV"/>
</dbReference>
<dbReference type="NCBIfam" id="TIGR01399">
    <property type="entry name" value="hrcV"/>
    <property type="match status" value="1"/>
</dbReference>
<dbReference type="PANTHER" id="PTHR30161">
    <property type="entry name" value="FLAGELLAR EXPORT PROTEIN, MEMBRANE FLHA SUBUNIT-RELATED"/>
    <property type="match status" value="1"/>
</dbReference>
<dbReference type="PANTHER" id="PTHR30161:SF2">
    <property type="entry name" value="INVASION PROTEIN INVA"/>
    <property type="match status" value="1"/>
</dbReference>
<dbReference type="Pfam" id="PF00771">
    <property type="entry name" value="FHIPEP"/>
    <property type="match status" value="1"/>
</dbReference>
<dbReference type="PIRSF" id="PIRSF005419">
    <property type="entry name" value="FlhA"/>
    <property type="match status" value="1"/>
</dbReference>
<dbReference type="PRINTS" id="PR00949">
    <property type="entry name" value="TYPE3IMAPROT"/>
</dbReference>
<dbReference type="PROSITE" id="PS00994">
    <property type="entry name" value="FHIPEP"/>
    <property type="match status" value="1"/>
</dbReference>
<evidence type="ECO:0000255" key="1"/>
<evidence type="ECO:0000305" key="2"/>
<feature type="chain" id="PRO_0000190024" description="Harpin secretion protein HrpI">
    <location>
        <begin position="1"/>
        <end position="715"/>
    </location>
</feature>
<feature type="transmembrane region" description="Helical" evidence="1">
    <location>
        <begin position="23"/>
        <end position="43"/>
    </location>
</feature>
<feature type="transmembrane region" description="Helical" evidence="1">
    <location>
        <begin position="45"/>
        <end position="65"/>
    </location>
</feature>
<feature type="transmembrane region" description="Helical" evidence="1">
    <location>
        <begin position="69"/>
        <end position="89"/>
    </location>
</feature>
<feature type="transmembrane region" description="Helical" evidence="1">
    <location>
        <begin position="115"/>
        <end position="135"/>
    </location>
</feature>
<feature type="transmembrane region" description="Helical" evidence="1">
    <location>
        <begin position="203"/>
        <end position="223"/>
    </location>
</feature>
<feature type="transmembrane region" description="Helical" evidence="1">
    <location>
        <begin position="241"/>
        <end position="261"/>
    </location>
</feature>
<feature type="transmembrane region" description="Helical" evidence="1">
    <location>
        <begin position="298"/>
        <end position="318"/>
    </location>
</feature>
<protein>
    <recommendedName>
        <fullName>Harpin secretion protein HrpI</fullName>
    </recommendedName>
</protein>
<comment type="function">
    <text>Involved in the secretion of harpin; a proteinaceous elicitor of the hypersensitivity response in plants.</text>
</comment>
<comment type="subcellular location">
    <subcellularLocation>
        <location evidence="2">Cell inner membrane</location>
        <topology evidence="2">Multi-pass membrane protein</topology>
    </subcellularLocation>
</comment>
<comment type="similarity">
    <text evidence="2">Belongs to the FHIPEP (flagella/HR/invasion proteins export pore) family.</text>
</comment>
<reference key="1">
    <citation type="journal article" date="1993" name="J. Bacteriol.">
        <title>HrpI of Erwinia amylovora functions in secretion of harpin and is a member of a new protein family.</title>
        <authorList>
            <person name="Wei Z.-M."/>
            <person name="Beer S.V."/>
        </authorList>
    </citation>
    <scope>NUCLEOTIDE SEQUENCE [GENOMIC DNA]</scope>
    <source>
        <strain>Ea321</strain>
    </source>
</reference>
<reference key="2">
    <citation type="submission" date="2006-03" db="EMBL/GenBank/DDBJ databases">
        <authorList>
            <person name="Beer S.V."/>
        </authorList>
    </citation>
    <scope>SEQUENCE REVISION</scope>
</reference>
<name>HRPI_ERWAM</name>
<organism>
    <name type="scientific">Erwinia amylovora</name>
    <name type="common">Fire blight bacteria</name>
    <dbReference type="NCBI Taxonomy" id="552"/>
    <lineage>
        <taxon>Bacteria</taxon>
        <taxon>Pseudomonadati</taxon>
        <taxon>Pseudomonadota</taxon>
        <taxon>Gammaproteobacteria</taxon>
        <taxon>Enterobacterales</taxon>
        <taxon>Erwiniaceae</taxon>
        <taxon>Erwinia</taxon>
    </lineage>
</organism>